<name>HSP1_CHICK</name>
<protein>
    <recommendedName>
        <fullName>Sperm histone</fullName>
    </recommendedName>
    <alternativeName>
        <fullName>Galline</fullName>
    </alternativeName>
    <alternativeName>
        <fullName>Protamine</fullName>
    </alternativeName>
</protein>
<accession>P15340</accession>
<accession>P02320</accession>
<feature type="initiator methionine" description="Removed" evidence="3">
    <location>
        <position position="1"/>
    </location>
</feature>
<feature type="chain" id="PRO_0000191589" description="Sperm histone">
    <location>
        <begin position="2"/>
        <end position="62"/>
    </location>
</feature>
<feature type="region of interest" description="Disordered" evidence="2">
    <location>
        <begin position="1"/>
        <end position="62"/>
    </location>
</feature>
<feature type="modified residue" description="Phosphothreonine" evidence="1">
    <location>
        <position position="9"/>
    </location>
</feature>
<proteinExistence type="evidence at protein level"/>
<sequence length="62" mass="8117">MARYRRSRTRSRSPRSRRRRRRSGRRRSPRRRRRYGSARRSRRSVGGRRRRYGSRRRRRRRY</sequence>
<reference key="1">
    <citation type="journal article" date="1989" name="J. Biol. Chem.">
        <title>Chicken protamine genes are intronless. The complete genomic sequence and organization of the two loci.</title>
        <authorList>
            <person name="Oliva R."/>
            <person name="Dixon G.H."/>
        </authorList>
    </citation>
    <scope>NUCLEOTIDE SEQUENCE [GENOMIC DNA]</scope>
</reference>
<reference key="2">
    <citation type="journal article" date="1976" name="Int. J. Pept. Protein Res.">
        <title>Studies on a protamine (galline) from fowl sperm. 3. The total amino acid sequence of intact galline molecule.</title>
        <authorList>
            <person name="Nakano M."/>
            <person name="Tobita T."/>
            <person name="Ando T."/>
        </authorList>
    </citation>
    <scope>PROTEIN SEQUENCE OF 2-62</scope>
    <source>
        <tissue>Sperm</tissue>
    </source>
</reference>
<reference key="3">
    <citation type="journal article" date="1988" name="Dev. Biol.">
        <title>Haploid expression of the rooster protamine mRNA in the postmeiotic stages of spermatogenesis.</title>
        <authorList>
            <person name="Oliva R."/>
            <person name="Mezquita J."/>
            <person name="Mezquita C."/>
            <person name="Dixon G.H."/>
        </authorList>
    </citation>
    <scope>NUCLEOTIDE SEQUENCE [MRNA] OF 49-62</scope>
</reference>
<keyword id="KW-0158">Chromosome</keyword>
<keyword id="KW-0217">Developmental protein</keyword>
<keyword id="KW-0221">Differentiation</keyword>
<keyword id="KW-0903">Direct protein sequencing</keyword>
<keyword id="KW-0226">DNA condensation</keyword>
<keyword id="KW-0238">DNA-binding</keyword>
<keyword id="KW-0544">Nucleosome core</keyword>
<keyword id="KW-0539">Nucleus</keyword>
<keyword id="KW-0597">Phosphoprotein</keyword>
<keyword id="KW-1185">Reference proteome</keyword>
<keyword id="KW-0744">Spermatogenesis</keyword>
<dbReference type="EMBL" id="L38713">
    <property type="protein sequence ID" value="AAA58721.1"/>
    <property type="molecule type" value="Genomic_DNA"/>
</dbReference>
<dbReference type="EMBL" id="M28100">
    <property type="protein sequence ID" value="AAA78951.1"/>
    <property type="molecule type" value="Genomic_DNA"/>
</dbReference>
<dbReference type="EMBL" id="M19078">
    <property type="protein sequence ID" value="AAA49049.1"/>
    <property type="status" value="ALT_SEQ"/>
    <property type="molecule type" value="mRNA"/>
</dbReference>
<dbReference type="PIR" id="A02662">
    <property type="entry name" value="GACH"/>
</dbReference>
<dbReference type="PIR" id="A34326">
    <property type="entry name" value="A34326"/>
</dbReference>
<dbReference type="STRING" id="9031.ENSGALP00000055563"/>
<dbReference type="iPTMnet" id="P15340"/>
<dbReference type="Ensembl" id="ENSGALT00000115928">
    <property type="protein sequence ID" value="ENSGALP00000081842"/>
    <property type="gene ID" value="ENSGALG00000064493"/>
</dbReference>
<dbReference type="Ensembl" id="ENSGALT00010044850.1">
    <property type="protein sequence ID" value="ENSGALP00010026772.1"/>
    <property type="gene ID" value="ENSGALG00010018538.1"/>
</dbReference>
<dbReference type="InParanoid" id="P15340"/>
<dbReference type="PRO" id="PR:P15340"/>
<dbReference type="Proteomes" id="UP000000539">
    <property type="component" value="Chromosome 4"/>
</dbReference>
<dbReference type="Bgee" id="ENSGALG00000049332">
    <property type="expression patterns" value="Expressed in spermatid and 6 other cell types or tissues"/>
</dbReference>
<dbReference type="GO" id="GO:0000786">
    <property type="term" value="C:nucleosome"/>
    <property type="evidence" value="ECO:0007669"/>
    <property type="project" value="UniProtKB-KW"/>
</dbReference>
<dbReference type="GO" id="GO:0005634">
    <property type="term" value="C:nucleus"/>
    <property type="evidence" value="ECO:0007669"/>
    <property type="project" value="UniProtKB-SubCell"/>
</dbReference>
<dbReference type="GO" id="GO:0003677">
    <property type="term" value="F:DNA binding"/>
    <property type="evidence" value="ECO:0000314"/>
    <property type="project" value="CAFA"/>
</dbReference>
<dbReference type="GO" id="GO:0030261">
    <property type="term" value="P:chromosome condensation"/>
    <property type="evidence" value="ECO:0007669"/>
    <property type="project" value="UniProtKB-KW"/>
</dbReference>
<dbReference type="GO" id="GO:0035092">
    <property type="term" value="P:sperm DNA condensation"/>
    <property type="evidence" value="ECO:0007669"/>
    <property type="project" value="InterPro"/>
</dbReference>
<dbReference type="DisProt" id="DP00057"/>
<dbReference type="InterPro" id="IPR000221">
    <property type="entry name" value="Protamine_P1"/>
</dbReference>
<dbReference type="PROSITE" id="PS00048">
    <property type="entry name" value="PROTAMINE_P1"/>
    <property type="match status" value="1"/>
</dbReference>
<evidence type="ECO:0000255" key="1"/>
<evidence type="ECO:0000256" key="2">
    <source>
        <dbReference type="SAM" id="MobiDB-lite"/>
    </source>
</evidence>
<evidence type="ECO:0000269" key="3">
    <source>
    </source>
</evidence>
<evidence type="ECO:0000305" key="4"/>
<comment type="function">
    <text>Protamines substitute for histones in the chromatin of sperm during the haploid phase of spermatogenesis. They compact sperm DNA into a highly condensed, stable and inactive complex.</text>
</comment>
<comment type="subcellular location">
    <subcellularLocation>
        <location>Nucleus</location>
    </subcellularLocation>
    <subcellularLocation>
        <location>Chromosome</location>
    </subcellularLocation>
</comment>
<comment type="tissue specificity">
    <text>Testis.</text>
</comment>
<comment type="similarity">
    <text evidence="4">Belongs to the protamine P1 family.</text>
</comment>
<comment type="sequence caution" evidence="4">
    <conflict type="miscellaneous discrepancy" ref="2"/>
    <text>Very different from the sequence obtained by DNA sequencing.</text>
</comment>
<organism>
    <name type="scientific">Gallus gallus</name>
    <name type="common">Chicken</name>
    <dbReference type="NCBI Taxonomy" id="9031"/>
    <lineage>
        <taxon>Eukaryota</taxon>
        <taxon>Metazoa</taxon>
        <taxon>Chordata</taxon>
        <taxon>Craniata</taxon>
        <taxon>Vertebrata</taxon>
        <taxon>Euteleostomi</taxon>
        <taxon>Archelosauria</taxon>
        <taxon>Archosauria</taxon>
        <taxon>Dinosauria</taxon>
        <taxon>Saurischia</taxon>
        <taxon>Theropoda</taxon>
        <taxon>Coelurosauria</taxon>
        <taxon>Aves</taxon>
        <taxon>Neognathae</taxon>
        <taxon>Galloanserae</taxon>
        <taxon>Galliformes</taxon>
        <taxon>Phasianidae</taxon>
        <taxon>Phasianinae</taxon>
        <taxon>Gallus</taxon>
    </lineage>
</organism>